<protein>
    <recommendedName>
        <fullName evidence="1">L-ribulose-5-phosphate 4-epimerase UlaF</fullName>
        <ecNumber evidence="1">5.1.3.4</ecNumber>
    </recommendedName>
    <alternativeName>
        <fullName evidence="1">L-ascorbate utilization protein F</fullName>
    </alternativeName>
    <alternativeName>
        <fullName evidence="1">Phosphoribulose isomerase</fullName>
    </alternativeName>
</protein>
<proteinExistence type="inferred from homology"/>
<organism>
    <name type="scientific">Escherichia coli O6:K15:H31 (strain 536 / UPEC)</name>
    <dbReference type="NCBI Taxonomy" id="362663"/>
    <lineage>
        <taxon>Bacteria</taxon>
        <taxon>Pseudomonadati</taxon>
        <taxon>Pseudomonadota</taxon>
        <taxon>Gammaproteobacteria</taxon>
        <taxon>Enterobacterales</taxon>
        <taxon>Enterobacteriaceae</taxon>
        <taxon>Escherichia</taxon>
    </lineage>
</organism>
<keyword id="KW-0119">Carbohydrate metabolism</keyword>
<keyword id="KW-0413">Isomerase</keyword>
<keyword id="KW-0479">Metal-binding</keyword>
<keyword id="KW-0862">Zinc</keyword>
<sequence length="228" mass="25306">MQKLKQQVFEANMDLPHYGLVTFTWGNVSAIDRERGLVVIKPSGVAYETMKADDMVVVDMSGNVVEGEYRPSSDTATHLELYRRYPSLGGIVHTHSTHATAWAQAGLAIPALGTTHADYFFGDIPCTRGLSEEEVQGEYELNTGKVIIETLGDAEPLHTPGIVVYQHGPFAWGKDAHDAVHNAVVMEEVAKMAWIARSINPQLNHIDSFLMNKHFMRKHGPNAYYGQK</sequence>
<comment type="function">
    <text evidence="1">Catalyzes the isomerization of L-ribulose 5-phosphate to D-xylulose 5-phosphate. Is involved in the anaerobic L-ascorbate utilization.</text>
</comment>
<comment type="catalytic activity">
    <reaction evidence="1">
        <text>L-ribulose 5-phosphate = D-xylulose 5-phosphate</text>
        <dbReference type="Rhea" id="RHEA:22368"/>
        <dbReference type="ChEBI" id="CHEBI:57737"/>
        <dbReference type="ChEBI" id="CHEBI:58226"/>
        <dbReference type="EC" id="5.1.3.4"/>
    </reaction>
</comment>
<comment type="cofactor">
    <cofactor evidence="1">
        <name>Zn(2+)</name>
        <dbReference type="ChEBI" id="CHEBI:29105"/>
    </cofactor>
    <text evidence="1">Binds 1 zinc ion per subunit.</text>
</comment>
<comment type="pathway">
    <text evidence="1">Cofactor degradation; L-ascorbate degradation; D-xylulose 5-phosphate from L-ascorbate: step 4/4.</text>
</comment>
<comment type="induction">
    <text evidence="1">Induced by L-ascorbate. Repressed by UlaR.</text>
</comment>
<comment type="similarity">
    <text evidence="1">Belongs to the aldolase class II family. AraD/FucA subfamily.</text>
</comment>
<dbReference type="EC" id="5.1.3.4" evidence="1"/>
<dbReference type="EMBL" id="CP000247">
    <property type="protein sequence ID" value="ABG72384.1"/>
    <property type="molecule type" value="Genomic_DNA"/>
</dbReference>
<dbReference type="RefSeq" id="WP_001170781.1">
    <property type="nucleotide sequence ID" value="NC_008253.1"/>
</dbReference>
<dbReference type="SMR" id="Q0T9J5"/>
<dbReference type="KEGG" id="ecp:ECP_4443"/>
<dbReference type="HOGENOM" id="CLU_006033_5_0_6"/>
<dbReference type="UniPathway" id="UPA00263">
    <property type="reaction ID" value="UER00380"/>
</dbReference>
<dbReference type="Proteomes" id="UP000009182">
    <property type="component" value="Chromosome"/>
</dbReference>
<dbReference type="GO" id="GO:0005829">
    <property type="term" value="C:cytosol"/>
    <property type="evidence" value="ECO:0007669"/>
    <property type="project" value="TreeGrafter"/>
</dbReference>
<dbReference type="GO" id="GO:0016832">
    <property type="term" value="F:aldehyde-lyase activity"/>
    <property type="evidence" value="ECO:0007669"/>
    <property type="project" value="TreeGrafter"/>
</dbReference>
<dbReference type="GO" id="GO:0008742">
    <property type="term" value="F:L-ribulose-phosphate 4-epimerase activity"/>
    <property type="evidence" value="ECO:0007669"/>
    <property type="project" value="UniProtKB-UniRule"/>
</dbReference>
<dbReference type="GO" id="GO:0008270">
    <property type="term" value="F:zinc ion binding"/>
    <property type="evidence" value="ECO:0007669"/>
    <property type="project" value="UniProtKB-UniRule"/>
</dbReference>
<dbReference type="GO" id="GO:0019854">
    <property type="term" value="P:L-ascorbic acid catabolic process"/>
    <property type="evidence" value="ECO:0007669"/>
    <property type="project" value="UniProtKB-UniRule"/>
</dbReference>
<dbReference type="GO" id="GO:0019323">
    <property type="term" value="P:pentose catabolic process"/>
    <property type="evidence" value="ECO:0007669"/>
    <property type="project" value="TreeGrafter"/>
</dbReference>
<dbReference type="CDD" id="cd00398">
    <property type="entry name" value="Aldolase_II"/>
    <property type="match status" value="1"/>
</dbReference>
<dbReference type="FunFam" id="3.40.225.10:FF:000001">
    <property type="entry name" value="L-ribulose-5-phosphate 4-epimerase UlaF"/>
    <property type="match status" value="1"/>
</dbReference>
<dbReference type="Gene3D" id="3.40.225.10">
    <property type="entry name" value="Class II aldolase/adducin N-terminal domain"/>
    <property type="match status" value="1"/>
</dbReference>
<dbReference type="HAMAP" id="MF_01952">
    <property type="entry name" value="UlaF"/>
    <property type="match status" value="1"/>
</dbReference>
<dbReference type="InterPro" id="IPR050197">
    <property type="entry name" value="Aldolase_class_II_sugar_metab"/>
</dbReference>
<dbReference type="InterPro" id="IPR001303">
    <property type="entry name" value="Aldolase_II/adducin_N"/>
</dbReference>
<dbReference type="InterPro" id="IPR036409">
    <property type="entry name" value="Aldolase_II/adducin_N_sf"/>
</dbReference>
<dbReference type="InterPro" id="IPR023499">
    <property type="entry name" value="UlaF"/>
</dbReference>
<dbReference type="NCBIfam" id="NF006047">
    <property type="entry name" value="PRK08193.1"/>
    <property type="match status" value="1"/>
</dbReference>
<dbReference type="NCBIfam" id="NF009003">
    <property type="entry name" value="PRK12348.1"/>
    <property type="match status" value="1"/>
</dbReference>
<dbReference type="PANTHER" id="PTHR22789">
    <property type="entry name" value="FUCULOSE PHOSPHATE ALDOLASE"/>
    <property type="match status" value="1"/>
</dbReference>
<dbReference type="PANTHER" id="PTHR22789:SF9">
    <property type="entry name" value="L-RIBULOSE-5-PHOSPHATE 4-EPIMERASE ULAF"/>
    <property type="match status" value="1"/>
</dbReference>
<dbReference type="Pfam" id="PF00596">
    <property type="entry name" value="Aldolase_II"/>
    <property type="match status" value="1"/>
</dbReference>
<dbReference type="SMART" id="SM01007">
    <property type="entry name" value="Aldolase_II"/>
    <property type="match status" value="1"/>
</dbReference>
<dbReference type="SUPFAM" id="SSF53639">
    <property type="entry name" value="AraD/HMP-PK domain-like"/>
    <property type="match status" value="1"/>
</dbReference>
<feature type="chain" id="PRO_1000070639" description="L-ribulose-5-phosphate 4-epimerase UlaF">
    <location>
        <begin position="1"/>
        <end position="228"/>
    </location>
</feature>
<feature type="active site" description="Proton donor/acceptor" evidence="1">
    <location>
        <position position="118"/>
    </location>
</feature>
<feature type="active site" description="Proton donor/acceptor" evidence="1">
    <location>
        <position position="225"/>
    </location>
</feature>
<feature type="binding site" evidence="1">
    <location>
        <begin position="26"/>
        <end position="27"/>
    </location>
    <ligand>
        <name>substrate</name>
    </ligand>
</feature>
<feature type="binding site" evidence="1">
    <location>
        <begin position="43"/>
        <end position="44"/>
    </location>
    <ligand>
        <name>substrate</name>
    </ligand>
</feature>
<feature type="binding site" evidence="1">
    <location>
        <begin position="72"/>
        <end position="73"/>
    </location>
    <ligand>
        <name>substrate</name>
    </ligand>
</feature>
<feature type="binding site" evidence="1">
    <location>
        <position position="74"/>
    </location>
    <ligand>
        <name>Zn(2+)</name>
        <dbReference type="ChEBI" id="CHEBI:29105"/>
    </ligand>
</feature>
<feature type="binding site" evidence="1">
    <location>
        <position position="93"/>
    </location>
    <ligand>
        <name>Zn(2+)</name>
        <dbReference type="ChEBI" id="CHEBI:29105"/>
    </ligand>
</feature>
<feature type="binding site" evidence="1">
    <location>
        <position position="95"/>
    </location>
    <ligand>
        <name>Zn(2+)</name>
        <dbReference type="ChEBI" id="CHEBI:29105"/>
    </ligand>
</feature>
<feature type="binding site" evidence="1">
    <location>
        <position position="167"/>
    </location>
    <ligand>
        <name>Zn(2+)</name>
        <dbReference type="ChEBI" id="CHEBI:29105"/>
    </ligand>
</feature>
<reference key="1">
    <citation type="journal article" date="2006" name="Mol. Microbiol.">
        <title>Role of pathogenicity island-associated integrases in the genome plasticity of uropathogenic Escherichia coli strain 536.</title>
        <authorList>
            <person name="Hochhut B."/>
            <person name="Wilde C."/>
            <person name="Balling G."/>
            <person name="Middendorf B."/>
            <person name="Dobrindt U."/>
            <person name="Brzuszkiewicz E."/>
            <person name="Gottschalk G."/>
            <person name="Carniel E."/>
            <person name="Hacker J."/>
        </authorList>
    </citation>
    <scope>NUCLEOTIDE SEQUENCE [LARGE SCALE GENOMIC DNA]</scope>
    <source>
        <strain>536 / UPEC</strain>
    </source>
</reference>
<evidence type="ECO:0000255" key="1">
    <source>
        <dbReference type="HAMAP-Rule" id="MF_01952"/>
    </source>
</evidence>
<name>ULAF_ECOL5</name>
<accession>Q0T9J5</accession>
<gene>
    <name evidence="1" type="primary">ulaF</name>
    <name type="ordered locus">ECP_4443</name>
</gene>